<protein>
    <recommendedName>
        <fullName evidence="12">NPC intracellular cholesterol transporter 1</fullName>
    </recommendedName>
    <alternativeName>
        <fullName evidence="10">Niemann-Pick C1 protein</fullName>
    </alternativeName>
</protein>
<reference key="1">
    <citation type="journal article" date="1997" name="Science">
        <title>Murine model of Niemann-Pick C disease: mutation in a cholesterol homeostasis gene.</title>
        <authorList>
            <person name="Loftus S.K."/>
            <person name="Morris J.A."/>
            <person name="Carstea E.D."/>
            <person name="Gu J.Z."/>
            <person name="Cummings C."/>
            <person name="Brown A."/>
            <person name="Ellison J."/>
            <person name="Ohno K."/>
            <person name="Rosenfeld M.A."/>
            <person name="Tagle D.A."/>
            <person name="Pentchev P.G."/>
            <person name="Pavan W.J."/>
        </authorList>
    </citation>
    <scope>NUCLEOTIDE SEQUENCE [GENOMIC DNA / MRNA]</scope>
    <scope>TISSUE SPECIFICITY</scope>
    <scope>DISEASE</scope>
</reference>
<reference key="2">
    <citation type="journal article" date="2009" name="PLoS Biol.">
        <title>Lineage-specific biology revealed by a finished genome assembly of the mouse.</title>
        <authorList>
            <person name="Church D.M."/>
            <person name="Goodstadt L."/>
            <person name="Hillier L.W."/>
            <person name="Zody M.C."/>
            <person name="Goldstein S."/>
            <person name="She X."/>
            <person name="Bult C.J."/>
            <person name="Agarwala R."/>
            <person name="Cherry J.L."/>
            <person name="DiCuccio M."/>
            <person name="Hlavina W."/>
            <person name="Kapustin Y."/>
            <person name="Meric P."/>
            <person name="Maglott D."/>
            <person name="Birtle Z."/>
            <person name="Marques A.C."/>
            <person name="Graves T."/>
            <person name="Zhou S."/>
            <person name="Teague B."/>
            <person name="Potamousis K."/>
            <person name="Churas C."/>
            <person name="Place M."/>
            <person name="Herschleb J."/>
            <person name="Runnheim R."/>
            <person name="Forrest D."/>
            <person name="Amos-Landgraf J."/>
            <person name="Schwartz D.C."/>
            <person name="Cheng Z."/>
            <person name="Lindblad-Toh K."/>
            <person name="Eichler E.E."/>
            <person name="Ponting C.P."/>
        </authorList>
    </citation>
    <scope>NUCLEOTIDE SEQUENCE [LARGE SCALE GENOMIC DNA]</scope>
    <source>
        <strain>C57BL/6J</strain>
    </source>
</reference>
<reference key="3">
    <citation type="submission" date="2005-07" db="EMBL/GenBank/DDBJ databases">
        <authorList>
            <person name="Mural R.J."/>
            <person name="Adams M.D."/>
            <person name="Myers E.W."/>
            <person name="Smith H.O."/>
            <person name="Venter J.C."/>
        </authorList>
    </citation>
    <scope>NUCLEOTIDE SEQUENCE [LARGE SCALE GENOMIC DNA]</scope>
</reference>
<reference key="4">
    <citation type="journal article" date="2010" name="Cell">
        <title>A tissue-specific atlas of mouse protein phosphorylation and expression.</title>
        <authorList>
            <person name="Huttlin E.L."/>
            <person name="Jedrychowski M.P."/>
            <person name="Elias J.E."/>
            <person name="Goswami T."/>
            <person name="Rad R."/>
            <person name="Beausoleil S.A."/>
            <person name="Villen J."/>
            <person name="Haas W."/>
            <person name="Sowa M.E."/>
            <person name="Gygi S.P."/>
        </authorList>
    </citation>
    <scope>IDENTIFICATION BY MASS SPECTROMETRY [LARGE SCALE ANALYSIS]</scope>
    <source>
        <tissue>Heart</tissue>
        <tissue>Kidney</tissue>
        <tissue>Liver</tissue>
        <tissue>Lung</tissue>
        <tissue>Spleen</tissue>
        <tissue>Testis</tissue>
    </source>
</reference>
<reference key="5">
    <citation type="journal article" date="2006" name="J. Lipid Res.">
        <title>The Niemann-Pick C1 protein in recycling endosomes of presynaptic nerve terminals.</title>
        <authorList>
            <person name="Karten B."/>
            <person name="Campenot R.B."/>
            <person name="Vance D.E."/>
            <person name="Vance J.E."/>
        </authorList>
    </citation>
    <scope>FUNCTION</scope>
    <scope>SUBCELLULAR LOCATION</scope>
</reference>
<reference key="6">
    <citation type="journal article" date="2011" name="Curr. Opin. Lipidol.">
        <title>Function of the Niemann-Pick type C proteins and their bypass by cyclodextrin.</title>
        <authorList>
            <person name="Vance J.E."/>
            <person name="Peake K.B."/>
        </authorList>
    </citation>
    <scope>REVIEW ON FUNCTION</scope>
</reference>
<reference key="7">
    <citation type="journal article" date="2011" name="Proc. Natl. Acad. Sci. U.S.A.">
        <title>Niemann-Pick type C 1 function requires lumenal domain residues that mediate cholesterol-dependent NPC2 binding.</title>
        <authorList>
            <person name="Deffieu M.S."/>
            <person name="Pfeffer S.R."/>
        </authorList>
    </citation>
    <scope>INTERACTION WITH NPC2</scope>
    <scope>SUBCELLULAR LOCATION</scope>
    <scope>GLYCOSYLATION</scope>
    <scope>MUTAGENESIS OF VAL-378; ARG-404 AND ARG-518</scope>
</reference>
<reference key="8">
    <citation type="journal article" date="2011" name="Proc. Natl. Acad. Sci. U.S.A.">
        <title>Amino acid substitution in NPC1 that abolishes cholesterol binding reproduces phenotype of complete NPC1 deficiency in mice.</title>
        <authorList>
            <person name="Xie X."/>
            <person name="Brown M.S."/>
            <person name="Shelton J.M."/>
            <person name="Richardson J.A."/>
            <person name="Goldstein J.L."/>
            <person name="Liang G."/>
        </authorList>
    </citation>
    <scope>FUNCTION</scope>
    <scope>SUBCELLULAR LOCATION</scope>
    <scope>TISSUE SPECIFICITY</scope>
    <scope>GLYCOSYLATION</scope>
    <scope>MUTAGENESIS OF 202-PRO-PHE-203</scope>
</reference>
<reference key="9">
    <citation type="journal article" date="2012" name="Hum. Mol. Genet.">
        <title>A novel mouse model of Niemann-Pick type C disease carrying a D1005G-Npc1 mutation comparable to commonly observed human mutations.</title>
        <authorList>
            <person name="Maue R.A."/>
            <person name="Burgess R.W."/>
            <person name="Wang B."/>
            <person name="Wooley C.M."/>
            <person name="Seburn K.L."/>
            <person name="Vanier M.T."/>
            <person name="Rogers M.A."/>
            <person name="Chang C.C."/>
            <person name="Chang T.Y."/>
            <person name="Harris B.T."/>
            <person name="Graber D.J."/>
            <person name="Penatti C.A."/>
            <person name="Porter D.M."/>
            <person name="Szwergold B.S."/>
            <person name="Henderson L.P."/>
            <person name="Totenhagen J.W."/>
            <person name="Trouard T.P."/>
            <person name="Borbon I.A."/>
            <person name="Erickson R.P."/>
        </authorList>
    </citation>
    <scope>FUNCTION</scope>
    <scope>DISEASE</scope>
    <scope>TISSUE SPECIFICITY</scope>
    <scope>MUTAGENESIS OF ASP-1005</scope>
</reference>
<reference key="10">
    <citation type="journal article" date="2016" name="Proc. Natl. Acad. Sci. U.S.A.">
        <title>Clues to the mechanism of cholesterol transfer from the structure of NPC1 middle lumenal domain bound to NPC2.</title>
        <authorList>
            <person name="Li X."/>
            <person name="Saha P."/>
            <person name="Li J."/>
            <person name="Blobel G."/>
            <person name="Pfeffer S.R."/>
        </authorList>
    </citation>
    <scope>FUNCTION</scope>
    <scope>INTERACTION WITH NPC2</scope>
    <scope>SUBCELLULAR LOCATION</scope>
    <scope>MUTAGENESIS OF GLU-421; 502-ASP--TYR-504 AND 503-PHE-TYR-504</scope>
</reference>
<comment type="function">
    <text evidence="2 5 6 8 11">Intracellular cholesterol transporter which acts in concert with NPC2 and plays an important role in the egress of cholesterol from the endosomal/lysosomal compartment (PubMed:21896731, PubMed:22048958, PubMed:27551080). Unesterified cholesterol that has been released from LDLs in the lumen of the late endosomes/lysosomes is transferred by NPC2 to the cholesterol-binding pocket in the N-terminal domain of NPC1. Cholesterol binds to NPC1 with the hydroxyl group buried in the binding pocket (By similarity). May play a role in vesicular trafficking in glia, a process that may be crucial for maintaining the structural and functional integrity of nerve terminals (Probable). Inhibits cholesterol-mediated mTORC1 activation throught its interaction with SLC38A9 (By similarity).</text>
</comment>
<comment type="catalytic activity">
    <reaction evidence="2">
        <text>cholesterol(in) = cholesterol(out)</text>
        <dbReference type="Rhea" id="RHEA:39747"/>
        <dbReference type="ChEBI" id="CHEBI:16113"/>
    </reaction>
</comment>
<comment type="subunit">
    <text evidence="2 7 8">Interacts (via the second lumenal domain) with NPC2 (PubMed:22065762, PubMed:27551080). Interacts with TMEM97; the interaction may decrease NPC1 availability to the cell. Interacts with TIM1 (By similarity). Interacts with SLC38A9; this interaction inhibits cholesterol-mediated mTORC1 activation via its sterol transport activity (By similarity).</text>
</comment>
<comment type="interaction">
    <interactant intactId="EBI-13641434">
        <id>O35604</id>
    </interactant>
    <interactant intactId="EBI-10760263">
        <id>A0A0F6B1Q8</id>
        <label>sseJ</label>
    </interactant>
    <organismsDiffer>true</organismsDiffer>
    <experiments>3</experiments>
</comment>
<comment type="subcellular location">
    <subcellularLocation>
        <location evidence="2">Late endosome membrane</location>
        <topology evidence="2">Multi-pass membrane protein</topology>
    </subcellularLocation>
    <subcellularLocation>
        <location evidence="5 7 8">Lysosome membrane</location>
        <topology evidence="2">Multi-pass membrane protein</topology>
    </subcellularLocation>
</comment>
<comment type="tissue specificity">
    <text evidence="5 6 9">Detected in liver (at protein level) (PubMed:21896731, PubMed:22048958). Ubiquitous (PubMed:9211850). Detected in adult heart, spleen, lung, liver, skeletal muscle, kidney, testis (PubMed:9211850).</text>
</comment>
<comment type="domain">
    <text evidence="2">A cysteine-rich N-terminal domain and a C-terminal domain containing a di-leucine motif necessary for lysosomal targeting are critical for mobilization of cholesterol from lysosomes.</text>
</comment>
<comment type="PTM">
    <text evidence="5 7">N-glycosylated.</text>
</comment>
<comment type="disease">
    <text evidence="6 9">Defects in Npc1 cause a lysosomal storage disorder characterized by accumulation of cholesterol in lysosomes and impaired cholesterol homeostasis. Causes age-dependent loss of Purkinje cells, loss of body weight and leads then to ataxia and premature death at a median age of 72 days.</text>
</comment>
<comment type="similarity">
    <text evidence="11">Belongs to the patched family.</text>
</comment>
<dbReference type="EMBL" id="AF003348">
    <property type="protein sequence ID" value="AAB63372.1"/>
    <property type="molecule type" value="mRNA"/>
</dbReference>
<dbReference type="EMBL" id="AF003349">
    <property type="protein sequence ID" value="AAB63373.1"/>
    <property type="molecule type" value="Genomic_DNA"/>
</dbReference>
<dbReference type="EMBL" id="AC102096">
    <property type="status" value="NOT_ANNOTATED_CDS"/>
    <property type="molecule type" value="Genomic_DNA"/>
</dbReference>
<dbReference type="EMBL" id="AC102248">
    <property type="status" value="NOT_ANNOTATED_CDS"/>
    <property type="molecule type" value="Genomic_DNA"/>
</dbReference>
<dbReference type="EMBL" id="CH466622">
    <property type="protein sequence ID" value="EDL01560.1"/>
    <property type="molecule type" value="Genomic_DNA"/>
</dbReference>
<dbReference type="CCDS" id="CCDS29064.1"/>
<dbReference type="PIR" id="T30188">
    <property type="entry name" value="T30188"/>
</dbReference>
<dbReference type="RefSeq" id="NP_032746.2">
    <property type="nucleotide sequence ID" value="NM_008720.2"/>
</dbReference>
<dbReference type="SMR" id="O35604"/>
<dbReference type="BioGRID" id="201820">
    <property type="interactions" value="16"/>
</dbReference>
<dbReference type="FunCoup" id="O35604">
    <property type="interactions" value="2347"/>
</dbReference>
<dbReference type="IntAct" id="O35604">
    <property type="interactions" value="285"/>
</dbReference>
<dbReference type="MINT" id="O35604"/>
<dbReference type="STRING" id="10090.ENSMUSP00000025279"/>
<dbReference type="ChEMBL" id="CHEMBL2321610"/>
<dbReference type="SwissLipids" id="SLP:000000479"/>
<dbReference type="GlyConnect" id="2563">
    <property type="glycosylation" value="2 N-Linked glycans (2 sites)"/>
</dbReference>
<dbReference type="GlyCosmos" id="O35604">
    <property type="glycosylation" value="16 sites, 2 glycans"/>
</dbReference>
<dbReference type="GlyGen" id="O35604">
    <property type="glycosylation" value="19 sites, 10 N-linked glycans (9 sites), 1 O-linked glycan (1 site)"/>
</dbReference>
<dbReference type="iPTMnet" id="O35604"/>
<dbReference type="PhosphoSitePlus" id="O35604"/>
<dbReference type="SwissPalm" id="O35604"/>
<dbReference type="jPOST" id="O35604"/>
<dbReference type="PaxDb" id="10090-ENSMUSP00000025279"/>
<dbReference type="PeptideAtlas" id="O35604"/>
<dbReference type="ProteomicsDB" id="295510"/>
<dbReference type="Pumba" id="O35604"/>
<dbReference type="Antibodypedia" id="7463">
    <property type="antibodies" value="420 antibodies from 38 providers"/>
</dbReference>
<dbReference type="DNASU" id="18145"/>
<dbReference type="Ensembl" id="ENSMUST00000025279.6">
    <property type="protein sequence ID" value="ENSMUSP00000025279.6"/>
    <property type="gene ID" value="ENSMUSG00000024413.15"/>
</dbReference>
<dbReference type="GeneID" id="18145"/>
<dbReference type="KEGG" id="mmu:18145"/>
<dbReference type="UCSC" id="uc008ecb.1">
    <property type="organism name" value="mouse"/>
</dbReference>
<dbReference type="AGR" id="MGI:1097712"/>
<dbReference type="CTD" id="4864"/>
<dbReference type="MGI" id="MGI:1097712">
    <property type="gene designation" value="Npc1"/>
</dbReference>
<dbReference type="VEuPathDB" id="HostDB:ENSMUSG00000024413"/>
<dbReference type="eggNOG" id="KOG1933">
    <property type="taxonomic scope" value="Eukaryota"/>
</dbReference>
<dbReference type="GeneTree" id="ENSGT00940000156182"/>
<dbReference type="HOGENOM" id="CLU_002359_0_0_1"/>
<dbReference type="InParanoid" id="O35604"/>
<dbReference type="OMA" id="WWFDVES"/>
<dbReference type="OrthoDB" id="6510177at2759"/>
<dbReference type="PhylomeDB" id="O35604"/>
<dbReference type="TreeFam" id="TF300416"/>
<dbReference type="Reactome" id="R-MMU-8964038">
    <property type="pathway name" value="LDL clearance"/>
</dbReference>
<dbReference type="BioGRID-ORCS" id="18145">
    <property type="hits" value="4 hits in 84 CRISPR screens"/>
</dbReference>
<dbReference type="ChiTaRS" id="Npc1">
    <property type="organism name" value="mouse"/>
</dbReference>
<dbReference type="PRO" id="PR:O35604"/>
<dbReference type="Proteomes" id="UP000000589">
    <property type="component" value="Chromosome 18"/>
</dbReference>
<dbReference type="RNAct" id="O35604">
    <property type="molecule type" value="protein"/>
</dbReference>
<dbReference type="Bgee" id="ENSMUSG00000024413">
    <property type="expression patterns" value="Expressed in secondary oocyte and 255 other cell types or tissues"/>
</dbReference>
<dbReference type="GO" id="GO:0005783">
    <property type="term" value="C:endoplasmic reticulum"/>
    <property type="evidence" value="ECO:0000250"/>
    <property type="project" value="UniProtKB"/>
</dbReference>
<dbReference type="GO" id="GO:0005768">
    <property type="term" value="C:endosome"/>
    <property type="evidence" value="ECO:0000314"/>
    <property type="project" value="MGI"/>
</dbReference>
<dbReference type="GO" id="GO:0005576">
    <property type="term" value="C:extracellular region"/>
    <property type="evidence" value="ECO:0000314"/>
    <property type="project" value="UniProtKB"/>
</dbReference>
<dbReference type="GO" id="GO:0005794">
    <property type="term" value="C:Golgi apparatus"/>
    <property type="evidence" value="ECO:0000314"/>
    <property type="project" value="MGI"/>
</dbReference>
<dbReference type="GO" id="GO:0031902">
    <property type="term" value="C:late endosome membrane"/>
    <property type="evidence" value="ECO:0000250"/>
    <property type="project" value="UniProtKB"/>
</dbReference>
<dbReference type="GO" id="GO:0005765">
    <property type="term" value="C:lysosomal membrane"/>
    <property type="evidence" value="ECO:0000250"/>
    <property type="project" value="UniProtKB"/>
</dbReference>
<dbReference type="GO" id="GO:0005764">
    <property type="term" value="C:lysosome"/>
    <property type="evidence" value="ECO:0000314"/>
    <property type="project" value="UniProtKB"/>
</dbReference>
<dbReference type="GO" id="GO:0016020">
    <property type="term" value="C:membrane"/>
    <property type="evidence" value="ECO:0000314"/>
    <property type="project" value="MGI"/>
</dbReference>
<dbReference type="GO" id="GO:0045121">
    <property type="term" value="C:membrane raft"/>
    <property type="evidence" value="ECO:0000314"/>
    <property type="project" value="MGI"/>
</dbReference>
<dbReference type="GO" id="GO:0005635">
    <property type="term" value="C:nuclear envelope"/>
    <property type="evidence" value="ECO:0000314"/>
    <property type="project" value="MGI"/>
</dbReference>
<dbReference type="GO" id="GO:0048471">
    <property type="term" value="C:perinuclear region of cytoplasm"/>
    <property type="evidence" value="ECO:0000250"/>
    <property type="project" value="UniProtKB"/>
</dbReference>
<dbReference type="GO" id="GO:0005886">
    <property type="term" value="C:plasma membrane"/>
    <property type="evidence" value="ECO:0000314"/>
    <property type="project" value="MGI"/>
</dbReference>
<dbReference type="GO" id="GO:0031982">
    <property type="term" value="C:vesicle"/>
    <property type="evidence" value="ECO:0000314"/>
    <property type="project" value="MGI"/>
</dbReference>
<dbReference type="GO" id="GO:0015485">
    <property type="term" value="F:cholesterol binding"/>
    <property type="evidence" value="ECO:0000250"/>
    <property type="project" value="UniProtKB"/>
</dbReference>
<dbReference type="GO" id="GO:0120020">
    <property type="term" value="F:cholesterol transfer activity"/>
    <property type="evidence" value="ECO:0007669"/>
    <property type="project" value="Ensembl"/>
</dbReference>
<dbReference type="GO" id="GO:0007628">
    <property type="term" value="P:adult walking behavior"/>
    <property type="evidence" value="ECO:0000316"/>
    <property type="project" value="MGI"/>
</dbReference>
<dbReference type="GO" id="GO:0006914">
    <property type="term" value="P:autophagy"/>
    <property type="evidence" value="ECO:0000266"/>
    <property type="project" value="MGI"/>
</dbReference>
<dbReference type="GO" id="GO:0008206">
    <property type="term" value="P:bile acid metabolic process"/>
    <property type="evidence" value="ECO:0000250"/>
    <property type="project" value="UniProtKB"/>
</dbReference>
<dbReference type="GO" id="GO:0071404">
    <property type="term" value="P:cellular response to low-density lipoprotein particle stimulus"/>
    <property type="evidence" value="ECO:0000314"/>
    <property type="project" value="MGI"/>
</dbReference>
<dbReference type="GO" id="GO:0071383">
    <property type="term" value="P:cellular response to steroid hormone stimulus"/>
    <property type="evidence" value="ECO:0000314"/>
    <property type="project" value="MGI"/>
</dbReference>
<dbReference type="GO" id="GO:0033344">
    <property type="term" value="P:cholesterol efflux"/>
    <property type="evidence" value="ECO:0000315"/>
    <property type="project" value="MGI"/>
</dbReference>
<dbReference type="GO" id="GO:0042632">
    <property type="term" value="P:cholesterol homeostasis"/>
    <property type="evidence" value="ECO:0000315"/>
    <property type="project" value="UniProtKB"/>
</dbReference>
<dbReference type="GO" id="GO:0008203">
    <property type="term" value="P:cholesterol metabolic process"/>
    <property type="evidence" value="ECO:0007669"/>
    <property type="project" value="UniProtKB-KW"/>
</dbReference>
<dbReference type="GO" id="GO:0010878">
    <property type="term" value="P:cholesterol storage"/>
    <property type="evidence" value="ECO:0000315"/>
    <property type="project" value="MGI"/>
</dbReference>
<dbReference type="GO" id="GO:0030301">
    <property type="term" value="P:cholesterol transport"/>
    <property type="evidence" value="ECO:0000315"/>
    <property type="project" value="MGI"/>
</dbReference>
<dbReference type="GO" id="GO:2000900">
    <property type="term" value="P:cyclodextrin metabolic process"/>
    <property type="evidence" value="ECO:0000315"/>
    <property type="project" value="MGI"/>
</dbReference>
<dbReference type="GO" id="GO:0006897">
    <property type="term" value="P:endocytosis"/>
    <property type="evidence" value="ECO:0000315"/>
    <property type="project" value="MGI"/>
</dbReference>
<dbReference type="GO" id="GO:0051649">
    <property type="term" value="P:establishment of localization in cell"/>
    <property type="evidence" value="ECO:0000315"/>
    <property type="project" value="MGI"/>
</dbReference>
<dbReference type="GO" id="GO:0090150">
    <property type="term" value="P:establishment of protein localization to membrane"/>
    <property type="evidence" value="ECO:0007669"/>
    <property type="project" value="Ensembl"/>
</dbReference>
<dbReference type="GO" id="GO:0010467">
    <property type="term" value="P:gene expression"/>
    <property type="evidence" value="ECO:0000315"/>
    <property type="project" value="MGI"/>
</dbReference>
<dbReference type="GO" id="GO:0032367">
    <property type="term" value="P:intracellular cholesterol transport"/>
    <property type="evidence" value="ECO:0000250"/>
    <property type="project" value="UniProtKB"/>
</dbReference>
<dbReference type="GO" id="GO:0032365">
    <property type="term" value="P:intracellular lipid transport"/>
    <property type="evidence" value="ECO:0000250"/>
    <property type="project" value="UniProtKB"/>
</dbReference>
<dbReference type="GO" id="GO:0001889">
    <property type="term" value="P:liver development"/>
    <property type="evidence" value="ECO:0000315"/>
    <property type="project" value="MGI"/>
</dbReference>
<dbReference type="GO" id="GO:0007041">
    <property type="term" value="P:lysosomal transport"/>
    <property type="evidence" value="ECO:0000250"/>
    <property type="project" value="UniProtKB"/>
</dbReference>
<dbReference type="GO" id="GO:0016236">
    <property type="term" value="P:macroautophagy"/>
    <property type="evidence" value="ECO:0000315"/>
    <property type="project" value="MGI"/>
</dbReference>
<dbReference type="GO" id="GO:0031579">
    <property type="term" value="P:membrane raft organization"/>
    <property type="evidence" value="ECO:0007669"/>
    <property type="project" value="Ensembl"/>
</dbReference>
<dbReference type="GO" id="GO:1904036">
    <property type="term" value="P:negative regulation of epithelial cell apoptotic process"/>
    <property type="evidence" value="ECO:0007669"/>
    <property type="project" value="Ensembl"/>
</dbReference>
<dbReference type="GO" id="GO:0016242">
    <property type="term" value="P:negative regulation of macroautophagy"/>
    <property type="evidence" value="ECO:0000315"/>
    <property type="project" value="MGI"/>
</dbReference>
<dbReference type="GO" id="GO:1904262">
    <property type="term" value="P:negative regulation of TORC1 signaling"/>
    <property type="evidence" value="ECO:0000250"/>
    <property type="project" value="UniProtKB"/>
</dbReference>
<dbReference type="GO" id="GO:0022008">
    <property type="term" value="P:neurogenesis"/>
    <property type="evidence" value="ECO:0000315"/>
    <property type="project" value="MGI"/>
</dbReference>
<dbReference type="GO" id="GO:0012501">
    <property type="term" value="P:programmed cell death"/>
    <property type="evidence" value="ECO:0000315"/>
    <property type="project" value="MGI"/>
</dbReference>
<dbReference type="GO" id="GO:0006486">
    <property type="term" value="P:protein glycosylation"/>
    <property type="evidence" value="ECO:0000314"/>
    <property type="project" value="UniProtKB"/>
</dbReference>
<dbReference type="GO" id="GO:0046686">
    <property type="term" value="P:response to cadmium ion"/>
    <property type="evidence" value="ECO:0007669"/>
    <property type="project" value="Ensembl"/>
</dbReference>
<dbReference type="GO" id="GO:0009410">
    <property type="term" value="P:response to xenobiotic stimulus"/>
    <property type="evidence" value="ECO:0000314"/>
    <property type="project" value="MGI"/>
</dbReference>
<dbReference type="GO" id="GO:0016125">
    <property type="term" value="P:sterol metabolic process"/>
    <property type="evidence" value="ECO:0000315"/>
    <property type="project" value="MGI"/>
</dbReference>
<dbReference type="GO" id="GO:0015918">
    <property type="term" value="P:sterol transport"/>
    <property type="evidence" value="ECO:0000315"/>
    <property type="project" value="MGI"/>
</dbReference>
<dbReference type="GO" id="GO:0046718">
    <property type="term" value="P:symbiont entry into host cell"/>
    <property type="evidence" value="ECO:0000315"/>
    <property type="project" value="CACAO"/>
</dbReference>
<dbReference type="FunFam" id="1.20.1640.10:FF:000008">
    <property type="entry name" value="NPC intracellular cholesterol transporter 1"/>
    <property type="match status" value="1"/>
</dbReference>
<dbReference type="FunFam" id="1.20.1640.10:FF:000010">
    <property type="entry name" value="NPC intracellular cholesterol transporter 1"/>
    <property type="match status" value="1"/>
</dbReference>
<dbReference type="Gene3D" id="1.20.1640.10">
    <property type="entry name" value="Multidrug efflux transporter AcrB transmembrane domain"/>
    <property type="match status" value="2"/>
</dbReference>
<dbReference type="InterPro" id="IPR053958">
    <property type="entry name" value="HMGCR/SNAP/NPC1-like_SSD"/>
</dbReference>
<dbReference type="InterPro" id="IPR004765">
    <property type="entry name" value="NPC1-like"/>
</dbReference>
<dbReference type="InterPro" id="IPR053956">
    <property type="entry name" value="NPC1_MLD"/>
</dbReference>
<dbReference type="InterPro" id="IPR032190">
    <property type="entry name" value="NPC1_N"/>
</dbReference>
<dbReference type="InterPro" id="IPR000731">
    <property type="entry name" value="SSD"/>
</dbReference>
<dbReference type="NCBIfam" id="TIGR00917">
    <property type="entry name" value="2A060601"/>
    <property type="match status" value="1"/>
</dbReference>
<dbReference type="PANTHER" id="PTHR45727">
    <property type="entry name" value="NPC INTRACELLULAR CHOLESTEROL TRANSPORTER 1"/>
    <property type="match status" value="1"/>
</dbReference>
<dbReference type="PANTHER" id="PTHR45727:SF2">
    <property type="entry name" value="NPC INTRACELLULAR CHOLESTEROL TRANSPORTER 1"/>
    <property type="match status" value="1"/>
</dbReference>
<dbReference type="Pfam" id="PF22314">
    <property type="entry name" value="NPC1_MLD"/>
    <property type="match status" value="1"/>
</dbReference>
<dbReference type="Pfam" id="PF16414">
    <property type="entry name" value="NPC1_N"/>
    <property type="match status" value="1"/>
</dbReference>
<dbReference type="Pfam" id="PF12349">
    <property type="entry name" value="Sterol-sensing"/>
    <property type="match status" value="1"/>
</dbReference>
<dbReference type="SUPFAM" id="SSF82866">
    <property type="entry name" value="Multidrug efflux transporter AcrB transmembrane domain"/>
    <property type="match status" value="2"/>
</dbReference>
<dbReference type="PROSITE" id="PS50156">
    <property type="entry name" value="SSD"/>
    <property type="match status" value="1"/>
</dbReference>
<proteinExistence type="evidence at protein level"/>
<organism>
    <name type="scientific">Mus musculus</name>
    <name type="common">Mouse</name>
    <dbReference type="NCBI Taxonomy" id="10090"/>
    <lineage>
        <taxon>Eukaryota</taxon>
        <taxon>Metazoa</taxon>
        <taxon>Chordata</taxon>
        <taxon>Craniata</taxon>
        <taxon>Vertebrata</taxon>
        <taxon>Euteleostomi</taxon>
        <taxon>Mammalia</taxon>
        <taxon>Eutheria</taxon>
        <taxon>Euarchontoglires</taxon>
        <taxon>Glires</taxon>
        <taxon>Rodentia</taxon>
        <taxon>Myomorpha</taxon>
        <taxon>Muroidea</taxon>
        <taxon>Muridae</taxon>
        <taxon>Murinae</taxon>
        <taxon>Mus</taxon>
        <taxon>Mus</taxon>
    </lineage>
</organism>
<keyword id="KW-0153">Cholesterol metabolism</keyword>
<keyword id="KW-1015">Disulfide bond</keyword>
<keyword id="KW-0967">Endosome</keyword>
<keyword id="KW-0325">Glycoprotein</keyword>
<keyword id="KW-0443">Lipid metabolism</keyword>
<keyword id="KW-0445">Lipid transport</keyword>
<keyword id="KW-0458">Lysosome</keyword>
<keyword id="KW-0472">Membrane</keyword>
<keyword id="KW-1185">Reference proteome</keyword>
<keyword id="KW-0732">Signal</keyword>
<keyword id="KW-0753">Steroid metabolism</keyword>
<keyword id="KW-1207">Sterol metabolism</keyword>
<keyword id="KW-0812">Transmembrane</keyword>
<keyword id="KW-1133">Transmembrane helix</keyword>
<keyword id="KW-0813">Transport</keyword>
<evidence type="ECO:0000250" key="1"/>
<evidence type="ECO:0000250" key="2">
    <source>
        <dbReference type="UniProtKB" id="O15118"/>
    </source>
</evidence>
<evidence type="ECO:0000255" key="3"/>
<evidence type="ECO:0000255" key="4">
    <source>
        <dbReference type="PROSITE-ProRule" id="PRU00199"/>
    </source>
</evidence>
<evidence type="ECO:0000269" key="5">
    <source>
    </source>
</evidence>
<evidence type="ECO:0000269" key="6">
    <source>
    </source>
</evidence>
<evidence type="ECO:0000269" key="7">
    <source>
    </source>
</evidence>
<evidence type="ECO:0000269" key="8">
    <source>
    </source>
</evidence>
<evidence type="ECO:0000269" key="9">
    <source>
    </source>
</evidence>
<evidence type="ECO:0000303" key="10">
    <source>
    </source>
</evidence>
<evidence type="ECO:0000305" key="11"/>
<evidence type="ECO:0000312" key="12">
    <source>
        <dbReference type="MGI" id="MGI:1097712"/>
    </source>
</evidence>
<sequence length="1277" mass="142885">MGAHHPALGLLLLLLCPAQVFSQSCVWYGECGIATGDKRYNCKYSGPPKPLPKDGYDLVQELCPGLFFDNVSLCCDIQQLQTLKSNLQLPLQFLSRCPSCFYNLMTLFCELTCSPHQSQFLNVTATEDYFDPKTQENKTNVKELEYFVGQSFANAMYNACRDVEAPSSNEKALGLLCGRDARACNATNWIEYMFNKDNGQAPFTIIPVFSDLSILGMEPMRNATKGCNESVDEVTGPCSCQDCSIVCGPKPQPPPPPMPWRIWGLDAMYVIMWVTYVAFLFVFFGALLAVWCHRRRYFVSEYTPIDSNIAFSVNSSDKGEASCCDPLGAAFDDCLRRMFTKWGAFCVRNPTCIIFFSLAFITVCSSGLVFVQVTTNPVELWSAPHSQARLEKEYFDKHFGPFFRTEQLIIQAPNTSVHIYEPYPAGADVPFGPPLNKEILHQVLDLQIAIESITASYNNETVTLQDICVAPLSPYNKNCTIMSVLNYFQNSHAVLDSQVGDDFYIYADYHTHFLYCVRAPASLNDTSLLHGPCLGTFGGPVFPWLVLGGYDDQNYNNATALVITFPVNNYYNDTERLQRAWAWEKEFISFVKNYKNPNLTISFTAERSIEDELNRESNSDVFTVIISYVVMFLYISLALGHIQSCSRLLVDSKISLGIAGILIVLSSVACSLGIFSYMGMPLTLIVIEVIPFLVLAVGVDNIFILVQTYQRDERLQEETLDQQLGRILGEVAPTMFLSSFSETSAFFFGALSSMPAVHTFSLFAGMAVLIDFLLQITCFVSLLGLDIKRQEKNHLDILCCVRGADDGQGSHASESYLFRFFKNYFAPLLLKDWLRPIVVAVFVGVLSFSVAVVNKVDIGLDQSLSMPNDSYVIDYFKSLAQYLHSGPPVYFVLEEGYNYSSRKGQNMVCGGMGCDNDSLVQQIFNAAELDTYTRVGFAPSSWIDDYFDWVSPQSSCCRLYNVTHQFCNASVMDPTCVRCRPLTPEGKQRPQGKEFMKFLPMFLSDNPNPKCGKGGHAAYGSAVNIVGDDTYIGATYFMTYHTILKTSADYTDAMKKARLIASNITETMRSKGSDYRVFPYSVFYVFYEQYLTIIDDTIFNLSVSLGSIFLVTLVVLGCELWSAVIMCITIAMILVNMFGVMWLWGISLNAVSLVNLVMSCGISVEFCSHITRAFTMSTKGSRVSRAEEALAHMGSSVFSGITLTKFGGIVVLAFAKSQIFEIFYFRMYLAMVLLGATHGLIFLPVLLSYIGPSVNKAKRHTTYERYRGTERERLLNF</sequence>
<feature type="signal peptide" evidence="3">
    <location>
        <begin position="1"/>
        <end position="22"/>
    </location>
</feature>
<feature type="chain" id="PRO_0000023262" description="NPC intracellular cholesterol transporter 1">
    <location>
        <begin position="23"/>
        <end position="1277"/>
    </location>
</feature>
<feature type="topological domain" description="Lumenal" evidence="11">
    <location>
        <begin position="23"/>
        <end position="269"/>
    </location>
</feature>
<feature type="transmembrane region" description="Helical" evidence="3">
    <location>
        <begin position="270"/>
        <end position="290"/>
    </location>
</feature>
<feature type="topological domain" description="Cytoplasmic" evidence="11">
    <location>
        <begin position="291"/>
        <end position="350"/>
    </location>
</feature>
<feature type="transmembrane region" description="Helical" evidence="3">
    <location>
        <begin position="351"/>
        <end position="371"/>
    </location>
</feature>
<feature type="topological domain" description="Lumenal" evidence="11">
    <location>
        <begin position="372"/>
        <end position="621"/>
    </location>
</feature>
<feature type="transmembrane region" description="Helical" evidence="3">
    <location>
        <begin position="622"/>
        <end position="642"/>
    </location>
</feature>
<feature type="topological domain" description="Cytoplasmic" evidence="11">
    <location>
        <begin position="643"/>
        <end position="653"/>
    </location>
</feature>
<feature type="transmembrane region" description="Helical" evidence="3">
    <location>
        <begin position="654"/>
        <end position="674"/>
    </location>
</feature>
<feature type="topological domain" description="Lumenal" evidence="11">
    <location>
        <begin position="675"/>
        <end position="683"/>
    </location>
</feature>
<feature type="transmembrane region" description="Helical" evidence="3">
    <location>
        <begin position="684"/>
        <end position="704"/>
    </location>
</feature>
<feature type="topological domain" description="Cytoplasmic" evidence="11">
    <location>
        <begin position="705"/>
        <end position="730"/>
    </location>
</feature>
<feature type="transmembrane region" description="Helical" evidence="3">
    <location>
        <begin position="731"/>
        <end position="751"/>
    </location>
</feature>
<feature type="topological domain" description="Lumenal" evidence="11">
    <location>
        <begin position="752"/>
        <end position="759"/>
    </location>
</feature>
<feature type="transmembrane region" description="Helical" evidence="3">
    <location>
        <begin position="760"/>
        <end position="780"/>
    </location>
</feature>
<feature type="topological domain" description="Cytoplasmic" evidence="11">
    <location>
        <begin position="781"/>
        <end position="832"/>
    </location>
</feature>
<feature type="transmembrane region" description="Helical" evidence="3">
    <location>
        <begin position="833"/>
        <end position="853"/>
    </location>
</feature>
<feature type="topological domain" description="Lumenal" evidence="11">
    <location>
        <begin position="854"/>
        <end position="1097"/>
    </location>
</feature>
<feature type="transmembrane region" description="Helical" evidence="3">
    <location>
        <begin position="1098"/>
        <end position="1118"/>
    </location>
</feature>
<feature type="topological domain" description="Cytoplasmic" evidence="11">
    <location>
        <begin position="1119"/>
        <end position="1123"/>
    </location>
</feature>
<feature type="transmembrane region" description="Helical" evidence="3">
    <location>
        <begin position="1124"/>
        <end position="1144"/>
    </location>
</feature>
<feature type="topological domain" description="Lumenal" evidence="11">
    <location>
        <position position="1145"/>
    </location>
</feature>
<feature type="transmembrane region" description="Helical" evidence="3">
    <location>
        <begin position="1146"/>
        <end position="1166"/>
    </location>
</feature>
<feature type="topological domain" description="Cytoplasmic" evidence="11">
    <location>
        <begin position="1167"/>
        <end position="1194"/>
    </location>
</feature>
<feature type="transmembrane region" description="Helical" evidence="3">
    <location>
        <begin position="1195"/>
        <end position="1215"/>
    </location>
</feature>
<feature type="topological domain" description="Lumenal" evidence="11">
    <location>
        <begin position="1216"/>
        <end position="1226"/>
    </location>
</feature>
<feature type="transmembrane region" description="Helical" evidence="3">
    <location>
        <begin position="1227"/>
        <end position="1247"/>
    </location>
</feature>
<feature type="topological domain" description="Cytoplasmic" evidence="11">
    <location>
        <begin position="1248"/>
        <end position="1277"/>
    </location>
</feature>
<feature type="domain" description="SSD" evidence="4">
    <location>
        <begin position="620"/>
        <end position="785"/>
    </location>
</feature>
<feature type="region of interest" description="Important for cholesterol binding and cholesterol transfer from NPC1 to liposomes" evidence="1">
    <location>
        <begin position="175"/>
        <end position="205"/>
    </location>
</feature>
<feature type="region of interest" description="Required for location in lysosomes" evidence="2">
    <location>
        <begin position="1274"/>
        <end position="1277"/>
    </location>
</feature>
<feature type="short sequence motif" description="Di-leucine motif" evidence="11">
    <location>
        <begin position="1274"/>
        <end position="1277"/>
    </location>
</feature>
<feature type="binding site" evidence="2">
    <location>
        <position position="41"/>
    </location>
    <ligand>
        <name>cholesterol</name>
        <dbReference type="ChEBI" id="CHEBI:16113"/>
    </ligand>
</feature>
<feature type="binding site" evidence="2">
    <location>
        <position position="79"/>
    </location>
    <ligand>
        <name>cholesterol</name>
        <dbReference type="ChEBI" id="CHEBI:16113"/>
    </ligand>
</feature>
<feature type="site" description="Important for cholesterol binding" evidence="2">
    <location>
        <position position="108"/>
    </location>
</feature>
<feature type="glycosylation site" description="N-linked (GlcNAc...) asparagine" evidence="3">
    <location>
        <position position="70"/>
    </location>
</feature>
<feature type="glycosylation site" description="N-linked (GlcNAc...) asparagine" evidence="3">
    <location>
        <position position="122"/>
    </location>
</feature>
<feature type="glycosylation site" description="N-linked (GlcNAc...) asparagine" evidence="3">
    <location>
        <position position="137"/>
    </location>
</feature>
<feature type="glycosylation site" description="N-linked (GlcNAc...) asparagine" evidence="3">
    <location>
        <position position="185"/>
    </location>
</feature>
<feature type="glycosylation site" description="N-linked (GlcNAc...) asparagine" evidence="3">
    <location>
        <position position="222"/>
    </location>
</feature>
<feature type="glycosylation site" description="N-linked (GlcNAc...) asparagine" evidence="3">
    <location>
        <position position="228"/>
    </location>
</feature>
<feature type="glycosylation site" description="N-linked (GlcNAc...) asparagine" evidence="3">
    <location>
        <position position="414"/>
    </location>
</feature>
<feature type="glycosylation site" description="N-linked (GlcNAc...) asparagine" evidence="3">
    <location>
        <position position="459"/>
    </location>
</feature>
<feature type="glycosylation site" description="N-linked (GlcNAc...) asparagine" evidence="3">
    <location>
        <position position="478"/>
    </location>
</feature>
<feature type="glycosylation site" description="N-linked (GlcNAc...) asparagine" evidence="3">
    <location>
        <position position="524"/>
    </location>
</feature>
<feature type="glycosylation site" description="N-linked (GlcNAc...) asparagine" evidence="3">
    <location>
        <position position="868"/>
    </location>
</feature>
<feature type="glycosylation site" description="N-linked (GlcNAc...) asparagine" evidence="3">
    <location>
        <position position="898"/>
    </location>
</feature>
<feature type="glycosylation site" description="N-linked (GlcNAc...) asparagine" evidence="3">
    <location>
        <position position="916"/>
    </location>
</feature>
<feature type="glycosylation site" description="N-linked (GlcNAc...) asparagine" evidence="3">
    <location>
        <position position="961"/>
    </location>
</feature>
<feature type="glycosylation site" description="N-linked (GlcNAc...) asparagine" evidence="3">
    <location>
        <position position="968"/>
    </location>
</feature>
<feature type="glycosylation site" description="N-linked (GlcNAc...) asparagine" evidence="3">
    <location>
        <position position="1063"/>
    </location>
</feature>
<feature type="disulfide bond" evidence="2">
    <location>
        <begin position="25"/>
        <end position="74"/>
    </location>
</feature>
<feature type="disulfide bond" evidence="2">
    <location>
        <begin position="31"/>
        <end position="42"/>
    </location>
</feature>
<feature type="disulfide bond" evidence="2">
    <location>
        <begin position="63"/>
        <end position="109"/>
    </location>
</feature>
<feature type="disulfide bond" evidence="2">
    <location>
        <begin position="75"/>
        <end position="113"/>
    </location>
</feature>
<feature type="disulfide bond" evidence="2">
    <location>
        <begin position="97"/>
        <end position="238"/>
    </location>
</feature>
<feature type="disulfide bond" evidence="2">
    <location>
        <begin position="100"/>
        <end position="160"/>
    </location>
</feature>
<feature type="disulfide bond" evidence="2">
    <location>
        <begin position="177"/>
        <end position="184"/>
    </location>
</feature>
<feature type="disulfide bond" evidence="2">
    <location>
        <begin position="227"/>
        <end position="243"/>
    </location>
</feature>
<feature type="disulfide bond" evidence="2">
    <location>
        <begin position="240"/>
        <end position="247"/>
    </location>
</feature>
<feature type="disulfide bond" evidence="2">
    <location>
        <begin position="468"/>
        <end position="479"/>
    </location>
</feature>
<feature type="disulfide bond" evidence="2">
    <location>
        <begin position="516"/>
        <end position="533"/>
    </location>
</feature>
<feature type="disulfide bond" evidence="2">
    <location>
        <begin position="909"/>
        <end position="914"/>
    </location>
</feature>
<feature type="disulfide bond" evidence="2">
    <location>
        <begin position="956"/>
        <end position="1011"/>
    </location>
</feature>
<feature type="disulfide bond" evidence="2">
    <location>
        <begin position="957"/>
        <end position="979"/>
    </location>
</feature>
<feature type="disulfide bond" evidence="2">
    <location>
        <begin position="967"/>
        <end position="976"/>
    </location>
</feature>
<feature type="mutagenesis site" description="Loss of function giving rise to cholesterol accumulation in kidney, liver, lung and spleen. No effect on lysosomal location. Mice display age-dependent weight loss, neurodegeneration with loss of Purkinje cells, ataxia and premature death at a median age of 84 days." evidence="5">
    <original>PF</original>
    <variation>AA</variation>
    <location>
        <begin position="202"/>
        <end position="203"/>
    </location>
</feature>
<feature type="mutagenesis site" description="No effect on affinity for NPC2." evidence="7">
    <original>V</original>
    <variation>A</variation>
    <location>
        <position position="378"/>
    </location>
</feature>
<feature type="mutagenesis site" description="Decreased affinity for NPC2." evidence="7">
    <original>R</original>
    <variation>Q</variation>
    <location>
        <position position="404"/>
    </location>
</feature>
<feature type="mutagenesis site" description="Strongly decreased affinity for NPC2; when associated with 503-A-A-504." evidence="8">
    <original>E</original>
    <variation>A</variation>
    <location>
        <position position="421"/>
    </location>
</feature>
<feature type="mutagenesis site" description="Strongly decreased affinity for NPC2." evidence="8">
    <original>DFY</original>
    <variation>AAA</variation>
    <location>
        <begin position="502"/>
        <end position="504"/>
    </location>
</feature>
<feature type="mutagenesis site" description="Decreased affinity for NPC2. Loss of function in cholesterol transport. No effect on subcellular location. Strongly decreased affinity for NPC2; when associated with A-421." evidence="8">
    <original>FY</original>
    <variation>AA</variation>
    <location>
        <begin position="503"/>
        <end position="504"/>
    </location>
</feature>
<feature type="mutagenesis site" description="Strongly decreased affinity for NPC2. No effect on lysosomal location." evidence="7">
    <original>R</original>
    <variation>Q</variation>
    <location>
        <position position="518"/>
    </location>
</feature>
<feature type="mutagenesis site" description="In Npc1-nmf164; strongly decreased protein levels. Causes abnormal lipid storage in the spleen and liver, loss of cerebellar Purkinje cells and age-dependent ataxia." evidence="6">
    <original>D</original>
    <variation>G</variation>
    <location>
        <position position="1005"/>
    </location>
</feature>
<feature type="sequence conflict" description="In Ref. 1; AAB63372." evidence="11" ref="1">
    <original>G</original>
    <variation>GL</variation>
    <location>
        <position position="9"/>
    </location>
</feature>
<feature type="sequence conflict" description="In Ref. 1; AAB63372." evidence="11" ref="1">
    <original>Q</original>
    <variation>P</variation>
    <location>
        <position position="135"/>
    </location>
</feature>
<feature type="sequence conflict" description="In Ref. 1; AAB63372." evidence="11" ref="1">
    <original>F</original>
    <variation>Y</variation>
    <location>
        <position position="147"/>
    </location>
</feature>
<feature type="sequence conflict" description="In Ref. 1; AAB63372." evidence="11" ref="1">
    <original>D</original>
    <variation>N</variation>
    <location>
        <position position="445"/>
    </location>
</feature>
<feature type="sequence conflict" description="In Ref. 1; AAB63373." evidence="11" ref="1">
    <original>N</original>
    <variation>D</variation>
    <location>
        <position position="478"/>
    </location>
</feature>
<feature type="sequence conflict" description="In Ref. 1; AAB63372." evidence="11" ref="1">
    <original>DY</original>
    <variation>AN</variation>
    <location>
        <begin position="874"/>
        <end position="875"/>
    </location>
</feature>
<gene>
    <name evidence="12" type="primary">Npc1</name>
</gene>
<name>NPC1_MOUSE</name>
<accession>O35604</accession>
<accession>G3X8W9</accession>
<accession>O35605</accession>